<comment type="function">
    <text evidence="1">Involved in the biosynthesis of the central metabolite phospho-alpha-D-ribosyl-1-pyrophosphate (PRPP) via the transfer of pyrophosphoryl group from ATP to 1-hydroxyl of ribose-5-phosphate (Rib-5-P).</text>
</comment>
<comment type="catalytic activity">
    <reaction evidence="1">
        <text>D-ribose 5-phosphate + ATP = 5-phospho-alpha-D-ribose 1-diphosphate + AMP + H(+)</text>
        <dbReference type="Rhea" id="RHEA:15609"/>
        <dbReference type="ChEBI" id="CHEBI:15378"/>
        <dbReference type="ChEBI" id="CHEBI:30616"/>
        <dbReference type="ChEBI" id="CHEBI:58017"/>
        <dbReference type="ChEBI" id="CHEBI:78346"/>
        <dbReference type="ChEBI" id="CHEBI:456215"/>
        <dbReference type="EC" id="2.7.6.1"/>
    </reaction>
</comment>
<comment type="cofactor">
    <cofactor evidence="1">
        <name>Mg(2+)</name>
        <dbReference type="ChEBI" id="CHEBI:18420"/>
    </cofactor>
    <text evidence="1">Binds 2 Mg(2+) ions per subunit.</text>
</comment>
<comment type="pathway">
    <text evidence="1">Metabolic intermediate biosynthesis; 5-phospho-alpha-D-ribose 1-diphosphate biosynthesis; 5-phospho-alpha-D-ribose 1-diphosphate from D-ribose 5-phosphate (route I): step 1/1.</text>
</comment>
<comment type="subunit">
    <text evidence="1">Homohexamer.</text>
</comment>
<comment type="subcellular location">
    <subcellularLocation>
        <location evidence="1">Cytoplasm</location>
    </subcellularLocation>
</comment>
<comment type="miscellaneous">
    <text evidence="2">Present in outer membrane vesicle formulations which are used as vaccines in human.</text>
</comment>
<comment type="similarity">
    <text evidence="1">Belongs to the ribose-phosphate pyrophosphokinase family. Class I subfamily.</text>
</comment>
<gene>
    <name evidence="1" type="primary">prs</name>
    <name type="synonym">prsA</name>
    <name type="ordered locus">NMB0875</name>
</gene>
<evidence type="ECO:0000255" key="1">
    <source>
        <dbReference type="HAMAP-Rule" id="MF_00583"/>
    </source>
</evidence>
<evidence type="ECO:0000305" key="2">
    <source>
    </source>
</evidence>
<organism>
    <name type="scientific">Neisseria meningitidis serogroup B (strain ATCC BAA-335 / MC58)</name>
    <dbReference type="NCBI Taxonomy" id="122586"/>
    <lineage>
        <taxon>Bacteria</taxon>
        <taxon>Pseudomonadati</taxon>
        <taxon>Pseudomonadota</taxon>
        <taxon>Betaproteobacteria</taxon>
        <taxon>Neisseriales</taxon>
        <taxon>Neisseriaceae</taxon>
        <taxon>Neisseria</taxon>
    </lineage>
</organism>
<accession>P65235</accession>
<accession>Q9JQV4</accession>
<sequence>MAAYDSLMVFTGNANPELAQRVVRHLDISLGNASVSKFSDGEVAVELLENVRGRDVFILQPTCAPTNDNLMEILTMADALKRASAGRITTAIPYFGYARQDRRPRSVRVPISAKLVANMLYSAGIDRVLTVDLHADQIQGFFDIPVDNIYATPILLNDIKQQRIENLTVVSPDIGGVVRARAVAKSLNADLAIIDKRRPKANVAEVMNIIGDIQGRTCLIVDDMIDTANTLCKAAVALKERGAERVLAYASHAVFSGEAVSRIASSEIDQVVVTDTIPLSEAAKNCDRIRQVTIAGLLAETVRRISNEESVSYLFNEEVMTGSMLLP</sequence>
<protein>
    <recommendedName>
        <fullName evidence="1">Ribose-phosphate pyrophosphokinase</fullName>
        <shortName evidence="1">RPPK</shortName>
        <ecNumber evidence="1">2.7.6.1</ecNumber>
    </recommendedName>
    <alternativeName>
        <fullName evidence="1">5-phospho-D-ribosyl alpha-1-diphosphate synthase</fullName>
    </alternativeName>
    <alternativeName>
        <fullName evidence="1">Phosphoribosyl diphosphate synthase</fullName>
    </alternativeName>
    <alternativeName>
        <fullName evidence="1">Phosphoribosyl pyrophosphate synthase</fullName>
        <shortName evidence="1">P-Rib-PP synthase</shortName>
        <shortName evidence="1">PRPP synthase</shortName>
        <shortName evidence="1">PRPPase</shortName>
    </alternativeName>
</protein>
<reference key="1">
    <citation type="journal article" date="2000" name="Science">
        <title>Complete genome sequence of Neisseria meningitidis serogroup B strain MC58.</title>
        <authorList>
            <person name="Tettelin H."/>
            <person name="Saunders N.J."/>
            <person name="Heidelberg J.F."/>
            <person name="Jeffries A.C."/>
            <person name="Nelson K.E."/>
            <person name="Eisen J.A."/>
            <person name="Ketchum K.A."/>
            <person name="Hood D.W."/>
            <person name="Peden J.F."/>
            <person name="Dodson R.J."/>
            <person name="Nelson W.C."/>
            <person name="Gwinn M.L."/>
            <person name="DeBoy R.T."/>
            <person name="Peterson J.D."/>
            <person name="Hickey E.K."/>
            <person name="Haft D.H."/>
            <person name="Salzberg S.L."/>
            <person name="White O."/>
            <person name="Fleischmann R.D."/>
            <person name="Dougherty B.A."/>
            <person name="Mason T.M."/>
            <person name="Ciecko A."/>
            <person name="Parksey D.S."/>
            <person name="Blair E."/>
            <person name="Cittone H."/>
            <person name="Clark E.B."/>
            <person name="Cotton M.D."/>
            <person name="Utterback T.R."/>
            <person name="Khouri H.M."/>
            <person name="Qin H."/>
            <person name="Vamathevan J.J."/>
            <person name="Gill J."/>
            <person name="Scarlato V."/>
            <person name="Masignani V."/>
            <person name="Pizza M."/>
            <person name="Grandi G."/>
            <person name="Sun L."/>
            <person name="Smith H.O."/>
            <person name="Fraser C.M."/>
            <person name="Moxon E.R."/>
            <person name="Rappuoli R."/>
            <person name="Venter J.C."/>
        </authorList>
    </citation>
    <scope>NUCLEOTIDE SEQUENCE [LARGE SCALE GENOMIC DNA]</scope>
    <source>
        <strain>ATCC BAA-335 / MC58</strain>
    </source>
</reference>
<reference key="2">
    <citation type="journal article" date="2006" name="Proteomics">
        <title>Proteomic analysis of a meningococcal outer membrane vesicle vaccine prepared from the group B strain NZ98/254.</title>
        <authorList>
            <person name="Vipond C."/>
            <person name="Suker J."/>
            <person name="Jones C."/>
            <person name="Tang C."/>
            <person name="Feavers I.M."/>
            <person name="Wheeler J.X."/>
        </authorList>
    </citation>
    <scope>IDENTIFICATION BY MASS SPECTROMETRY [LARGE SCALE ANALYSIS]</scope>
    <source>
        <strain>NZ98/254 / Serogroup B</strain>
    </source>
</reference>
<proteinExistence type="evidence at protein level"/>
<feature type="chain" id="PRO_0000141167" description="Ribose-phosphate pyrophosphokinase">
    <location>
        <begin position="1"/>
        <end position="327"/>
    </location>
</feature>
<feature type="active site" evidence="1">
    <location>
        <position position="196"/>
    </location>
</feature>
<feature type="binding site" evidence="1">
    <location>
        <begin position="40"/>
        <end position="42"/>
    </location>
    <ligand>
        <name>ATP</name>
        <dbReference type="ChEBI" id="CHEBI:30616"/>
    </ligand>
</feature>
<feature type="binding site" evidence="1">
    <location>
        <begin position="99"/>
        <end position="100"/>
    </location>
    <ligand>
        <name>ATP</name>
        <dbReference type="ChEBI" id="CHEBI:30616"/>
    </ligand>
</feature>
<feature type="binding site" evidence="1">
    <location>
        <position position="134"/>
    </location>
    <ligand>
        <name>Mg(2+)</name>
        <dbReference type="ChEBI" id="CHEBI:18420"/>
        <label>1</label>
    </ligand>
</feature>
<feature type="binding site" evidence="1">
    <location>
        <position position="173"/>
    </location>
    <ligand>
        <name>Mg(2+)</name>
        <dbReference type="ChEBI" id="CHEBI:18420"/>
        <label>2</label>
    </ligand>
</feature>
<feature type="binding site" evidence="1">
    <location>
        <position position="198"/>
    </location>
    <ligand>
        <name>D-ribose 5-phosphate</name>
        <dbReference type="ChEBI" id="CHEBI:78346"/>
    </ligand>
</feature>
<feature type="binding site" evidence="1">
    <location>
        <position position="222"/>
    </location>
    <ligand>
        <name>D-ribose 5-phosphate</name>
        <dbReference type="ChEBI" id="CHEBI:78346"/>
    </ligand>
</feature>
<feature type="binding site" evidence="1">
    <location>
        <begin position="226"/>
        <end position="230"/>
    </location>
    <ligand>
        <name>D-ribose 5-phosphate</name>
        <dbReference type="ChEBI" id="CHEBI:78346"/>
    </ligand>
</feature>
<name>KPRS_NEIMB</name>
<keyword id="KW-0067">ATP-binding</keyword>
<keyword id="KW-0963">Cytoplasm</keyword>
<keyword id="KW-0418">Kinase</keyword>
<keyword id="KW-0460">Magnesium</keyword>
<keyword id="KW-0479">Metal-binding</keyword>
<keyword id="KW-0545">Nucleotide biosynthesis</keyword>
<keyword id="KW-0547">Nucleotide-binding</keyword>
<keyword id="KW-1185">Reference proteome</keyword>
<keyword id="KW-0808">Transferase</keyword>
<dbReference type="EC" id="2.7.6.1" evidence="1"/>
<dbReference type="EMBL" id="AE002098">
    <property type="protein sequence ID" value="AAF41286.1"/>
    <property type="molecule type" value="Genomic_DNA"/>
</dbReference>
<dbReference type="PIR" id="F81146">
    <property type="entry name" value="F81146"/>
</dbReference>
<dbReference type="RefSeq" id="NP_273916.1">
    <property type="nucleotide sequence ID" value="NC_003112.2"/>
</dbReference>
<dbReference type="RefSeq" id="WP_002213870.1">
    <property type="nucleotide sequence ID" value="NC_003112.2"/>
</dbReference>
<dbReference type="SMR" id="P65235"/>
<dbReference type="FunCoup" id="P65235">
    <property type="interactions" value="577"/>
</dbReference>
<dbReference type="STRING" id="122586.NMB0875"/>
<dbReference type="PaxDb" id="122586-NMB0875"/>
<dbReference type="KEGG" id="nme:NMB0875"/>
<dbReference type="PATRIC" id="fig|122586.8.peg.1091"/>
<dbReference type="HOGENOM" id="CLU_033546_2_0_4"/>
<dbReference type="InParanoid" id="P65235"/>
<dbReference type="OrthoDB" id="9777067at2"/>
<dbReference type="UniPathway" id="UPA00087">
    <property type="reaction ID" value="UER00172"/>
</dbReference>
<dbReference type="Proteomes" id="UP000000425">
    <property type="component" value="Chromosome"/>
</dbReference>
<dbReference type="GO" id="GO:0005737">
    <property type="term" value="C:cytoplasm"/>
    <property type="evidence" value="ECO:0000318"/>
    <property type="project" value="GO_Central"/>
</dbReference>
<dbReference type="GO" id="GO:0002189">
    <property type="term" value="C:ribose phosphate diphosphokinase complex"/>
    <property type="evidence" value="ECO:0000318"/>
    <property type="project" value="GO_Central"/>
</dbReference>
<dbReference type="GO" id="GO:0005524">
    <property type="term" value="F:ATP binding"/>
    <property type="evidence" value="ECO:0007669"/>
    <property type="project" value="UniProtKB-KW"/>
</dbReference>
<dbReference type="GO" id="GO:0016301">
    <property type="term" value="F:kinase activity"/>
    <property type="evidence" value="ECO:0007669"/>
    <property type="project" value="UniProtKB-KW"/>
</dbReference>
<dbReference type="GO" id="GO:0000287">
    <property type="term" value="F:magnesium ion binding"/>
    <property type="evidence" value="ECO:0007669"/>
    <property type="project" value="UniProtKB-UniRule"/>
</dbReference>
<dbReference type="GO" id="GO:0004749">
    <property type="term" value="F:ribose phosphate diphosphokinase activity"/>
    <property type="evidence" value="ECO:0000318"/>
    <property type="project" value="GO_Central"/>
</dbReference>
<dbReference type="GO" id="GO:0006015">
    <property type="term" value="P:5-phosphoribose 1-diphosphate biosynthetic process"/>
    <property type="evidence" value="ECO:0000318"/>
    <property type="project" value="GO_Central"/>
</dbReference>
<dbReference type="GO" id="GO:0006164">
    <property type="term" value="P:purine nucleotide biosynthetic process"/>
    <property type="evidence" value="ECO:0000318"/>
    <property type="project" value="GO_Central"/>
</dbReference>
<dbReference type="GO" id="GO:0009156">
    <property type="term" value="P:ribonucleoside monophosphate biosynthetic process"/>
    <property type="evidence" value="ECO:0007669"/>
    <property type="project" value="InterPro"/>
</dbReference>
<dbReference type="CDD" id="cd06223">
    <property type="entry name" value="PRTases_typeI"/>
    <property type="match status" value="1"/>
</dbReference>
<dbReference type="FunFam" id="3.40.50.2020:FF:000001">
    <property type="entry name" value="Ribose-phosphate pyrophosphokinase"/>
    <property type="match status" value="1"/>
</dbReference>
<dbReference type="Gene3D" id="3.40.50.2020">
    <property type="match status" value="2"/>
</dbReference>
<dbReference type="HAMAP" id="MF_00583_B">
    <property type="entry name" value="RibP_PPkinase_B"/>
    <property type="match status" value="1"/>
</dbReference>
<dbReference type="InterPro" id="IPR000842">
    <property type="entry name" value="PRib_PP_synth_CS"/>
</dbReference>
<dbReference type="InterPro" id="IPR029099">
    <property type="entry name" value="Pribosyltran_N"/>
</dbReference>
<dbReference type="InterPro" id="IPR000836">
    <property type="entry name" value="PRibTrfase_dom"/>
</dbReference>
<dbReference type="InterPro" id="IPR029057">
    <property type="entry name" value="PRTase-like"/>
</dbReference>
<dbReference type="InterPro" id="IPR005946">
    <property type="entry name" value="Rib-P_diPkinase"/>
</dbReference>
<dbReference type="InterPro" id="IPR037515">
    <property type="entry name" value="Rib-P_diPkinase_bac"/>
</dbReference>
<dbReference type="NCBIfam" id="NF002320">
    <property type="entry name" value="PRK01259.1"/>
    <property type="match status" value="1"/>
</dbReference>
<dbReference type="NCBIfam" id="TIGR01251">
    <property type="entry name" value="ribP_PPkin"/>
    <property type="match status" value="1"/>
</dbReference>
<dbReference type="PANTHER" id="PTHR10210">
    <property type="entry name" value="RIBOSE-PHOSPHATE DIPHOSPHOKINASE FAMILY MEMBER"/>
    <property type="match status" value="1"/>
</dbReference>
<dbReference type="PANTHER" id="PTHR10210:SF41">
    <property type="entry name" value="RIBOSE-PHOSPHATE PYROPHOSPHOKINASE 1, CHLOROPLASTIC"/>
    <property type="match status" value="1"/>
</dbReference>
<dbReference type="Pfam" id="PF14572">
    <property type="entry name" value="Pribosyl_synth"/>
    <property type="match status" value="1"/>
</dbReference>
<dbReference type="Pfam" id="PF13793">
    <property type="entry name" value="Pribosyltran_N"/>
    <property type="match status" value="1"/>
</dbReference>
<dbReference type="SMART" id="SM01400">
    <property type="entry name" value="Pribosyltran_N"/>
    <property type="match status" value="1"/>
</dbReference>
<dbReference type="SUPFAM" id="SSF53271">
    <property type="entry name" value="PRTase-like"/>
    <property type="match status" value="1"/>
</dbReference>
<dbReference type="PROSITE" id="PS00114">
    <property type="entry name" value="PRPP_SYNTHASE"/>
    <property type="match status" value="1"/>
</dbReference>